<proteinExistence type="inferred from homology"/>
<dbReference type="EC" id="2.5.1.61" evidence="1"/>
<dbReference type="EMBL" id="AP009240">
    <property type="protein sequence ID" value="BAG79610.1"/>
    <property type="molecule type" value="Genomic_DNA"/>
</dbReference>
<dbReference type="RefSeq" id="WP_001307481.1">
    <property type="nucleotide sequence ID" value="NC_011415.1"/>
</dbReference>
<dbReference type="SMR" id="B6I4E0"/>
<dbReference type="GeneID" id="75204795"/>
<dbReference type="KEGG" id="ecy:ECSE_4086"/>
<dbReference type="HOGENOM" id="CLU_019704_0_2_6"/>
<dbReference type="UniPathway" id="UPA00251">
    <property type="reaction ID" value="UER00319"/>
</dbReference>
<dbReference type="Proteomes" id="UP000008199">
    <property type="component" value="Chromosome"/>
</dbReference>
<dbReference type="GO" id="GO:0005737">
    <property type="term" value="C:cytoplasm"/>
    <property type="evidence" value="ECO:0007669"/>
    <property type="project" value="TreeGrafter"/>
</dbReference>
<dbReference type="GO" id="GO:0004418">
    <property type="term" value="F:hydroxymethylbilane synthase activity"/>
    <property type="evidence" value="ECO:0007669"/>
    <property type="project" value="UniProtKB-UniRule"/>
</dbReference>
<dbReference type="GO" id="GO:0006782">
    <property type="term" value="P:protoporphyrinogen IX biosynthetic process"/>
    <property type="evidence" value="ECO:0007669"/>
    <property type="project" value="UniProtKB-UniRule"/>
</dbReference>
<dbReference type="CDD" id="cd13646">
    <property type="entry name" value="PBP2_EcHMBS_like"/>
    <property type="match status" value="1"/>
</dbReference>
<dbReference type="FunFam" id="3.30.160.40:FF:000002">
    <property type="entry name" value="Porphobilinogen deaminase"/>
    <property type="match status" value="1"/>
</dbReference>
<dbReference type="FunFam" id="3.40.190.10:FF:000004">
    <property type="entry name" value="Porphobilinogen deaminase"/>
    <property type="match status" value="1"/>
</dbReference>
<dbReference type="FunFam" id="3.40.190.10:FF:000005">
    <property type="entry name" value="Porphobilinogen deaminase"/>
    <property type="match status" value="1"/>
</dbReference>
<dbReference type="Gene3D" id="3.40.190.10">
    <property type="entry name" value="Periplasmic binding protein-like II"/>
    <property type="match status" value="2"/>
</dbReference>
<dbReference type="Gene3D" id="3.30.160.40">
    <property type="entry name" value="Porphobilinogen deaminase, C-terminal domain"/>
    <property type="match status" value="1"/>
</dbReference>
<dbReference type="HAMAP" id="MF_00260">
    <property type="entry name" value="Porphobil_deam"/>
    <property type="match status" value="1"/>
</dbReference>
<dbReference type="InterPro" id="IPR000860">
    <property type="entry name" value="HemC"/>
</dbReference>
<dbReference type="InterPro" id="IPR022419">
    <property type="entry name" value="Porphobilin_deaminase_cofac_BS"/>
</dbReference>
<dbReference type="InterPro" id="IPR022417">
    <property type="entry name" value="Porphobilin_deaminase_N"/>
</dbReference>
<dbReference type="InterPro" id="IPR022418">
    <property type="entry name" value="Porphobilinogen_deaminase_C"/>
</dbReference>
<dbReference type="InterPro" id="IPR036803">
    <property type="entry name" value="Porphobilinogen_deaminase_C_sf"/>
</dbReference>
<dbReference type="NCBIfam" id="TIGR00212">
    <property type="entry name" value="hemC"/>
    <property type="match status" value="1"/>
</dbReference>
<dbReference type="PANTHER" id="PTHR11557">
    <property type="entry name" value="PORPHOBILINOGEN DEAMINASE"/>
    <property type="match status" value="1"/>
</dbReference>
<dbReference type="PANTHER" id="PTHR11557:SF0">
    <property type="entry name" value="PORPHOBILINOGEN DEAMINASE"/>
    <property type="match status" value="1"/>
</dbReference>
<dbReference type="Pfam" id="PF01379">
    <property type="entry name" value="Porphobil_deam"/>
    <property type="match status" value="1"/>
</dbReference>
<dbReference type="Pfam" id="PF03900">
    <property type="entry name" value="Porphobil_deamC"/>
    <property type="match status" value="1"/>
</dbReference>
<dbReference type="PIRSF" id="PIRSF001438">
    <property type="entry name" value="4pyrrol_synth_OHMeBilane_synth"/>
    <property type="match status" value="1"/>
</dbReference>
<dbReference type="PRINTS" id="PR00151">
    <property type="entry name" value="PORPHBDMNASE"/>
</dbReference>
<dbReference type="SUPFAM" id="SSF53850">
    <property type="entry name" value="Periplasmic binding protein-like II"/>
    <property type="match status" value="1"/>
</dbReference>
<dbReference type="SUPFAM" id="SSF54782">
    <property type="entry name" value="Porphobilinogen deaminase (hydroxymethylbilane synthase), C-terminal domain"/>
    <property type="match status" value="1"/>
</dbReference>
<dbReference type="PROSITE" id="PS00533">
    <property type="entry name" value="PORPHOBILINOGEN_DEAM"/>
    <property type="match status" value="1"/>
</dbReference>
<protein>
    <recommendedName>
        <fullName evidence="1">Porphobilinogen deaminase</fullName>
        <shortName evidence="1">PBG</shortName>
        <ecNumber evidence="1">2.5.1.61</ecNumber>
    </recommendedName>
    <alternativeName>
        <fullName evidence="1">Hydroxymethylbilane synthase</fullName>
        <shortName evidence="1">HMBS</shortName>
    </alternativeName>
    <alternativeName>
        <fullName evidence="1">Pre-uroporphyrinogen synthase</fullName>
    </alternativeName>
</protein>
<accession>B6I4E0</accession>
<name>HEM3_ECOSE</name>
<reference key="1">
    <citation type="journal article" date="2008" name="DNA Res.">
        <title>Complete genome sequence and comparative analysis of the wild-type commensal Escherichia coli strain SE11 isolated from a healthy adult.</title>
        <authorList>
            <person name="Oshima K."/>
            <person name="Toh H."/>
            <person name="Ogura Y."/>
            <person name="Sasamoto H."/>
            <person name="Morita H."/>
            <person name="Park S.-H."/>
            <person name="Ooka T."/>
            <person name="Iyoda S."/>
            <person name="Taylor T.D."/>
            <person name="Hayashi T."/>
            <person name="Itoh K."/>
            <person name="Hattori M."/>
        </authorList>
    </citation>
    <scope>NUCLEOTIDE SEQUENCE [LARGE SCALE GENOMIC DNA]</scope>
    <source>
        <strain>SE11</strain>
    </source>
</reference>
<sequence length="313" mass="33865">MLDNVLRIATRQSPLALWQAHYVKDKLMASHPGLVVELVPMVTRGDVILDTPLAKVGGKGLFVKELEVALLENRADIAVHSMKDVPVEFPQGLGLVTICEREDPRDAFVSNNYDSLDALPAGSIVGTSSLRRQCQLAERRPDLIIRSLRGNVGTRLSKLDNGEYDAIILAVAGLKRLGLESRIRAALPPEISLPAVGQGAVGIECRLDDTRTRELLAALNHHETALRVTAERAMNTRLEGGCQVPIGSYAELIDGEIWLRALVGAPDGSQIIRGERRGAPQNAEQMGISLAEELLNNGAREILAEVYNGDAPA</sequence>
<keyword id="KW-0627">Porphyrin biosynthesis</keyword>
<keyword id="KW-0808">Transferase</keyword>
<gene>
    <name evidence="1" type="primary">hemC</name>
    <name type="ordered locus">ECSE_4086</name>
</gene>
<feature type="chain" id="PRO_1000114150" description="Porphobilinogen deaminase">
    <location>
        <begin position="1"/>
        <end position="313"/>
    </location>
</feature>
<feature type="modified residue" description="S-(dipyrrolylmethanemethyl)cysteine" evidence="1">
    <location>
        <position position="242"/>
    </location>
</feature>
<comment type="function">
    <text evidence="1">Tetrapolymerization of the monopyrrole PBG into the hydroxymethylbilane pre-uroporphyrinogen in several discrete steps.</text>
</comment>
<comment type="catalytic activity">
    <reaction evidence="1">
        <text>4 porphobilinogen + H2O = hydroxymethylbilane + 4 NH4(+)</text>
        <dbReference type="Rhea" id="RHEA:13185"/>
        <dbReference type="ChEBI" id="CHEBI:15377"/>
        <dbReference type="ChEBI" id="CHEBI:28938"/>
        <dbReference type="ChEBI" id="CHEBI:57845"/>
        <dbReference type="ChEBI" id="CHEBI:58126"/>
        <dbReference type="EC" id="2.5.1.61"/>
    </reaction>
</comment>
<comment type="cofactor">
    <cofactor evidence="1">
        <name>dipyrromethane</name>
        <dbReference type="ChEBI" id="CHEBI:60342"/>
    </cofactor>
    <text evidence="1">Binds 1 dipyrromethane group covalently.</text>
</comment>
<comment type="pathway">
    <text evidence="1">Porphyrin-containing compound metabolism; protoporphyrin-IX biosynthesis; coproporphyrinogen-III from 5-aminolevulinate: step 2/4.</text>
</comment>
<comment type="subunit">
    <text evidence="1">Monomer.</text>
</comment>
<comment type="miscellaneous">
    <text evidence="1">The porphobilinogen subunits are added to the dipyrromethane group.</text>
</comment>
<comment type="similarity">
    <text evidence="1">Belongs to the HMBS family.</text>
</comment>
<evidence type="ECO:0000255" key="1">
    <source>
        <dbReference type="HAMAP-Rule" id="MF_00260"/>
    </source>
</evidence>
<organism>
    <name type="scientific">Escherichia coli (strain SE11)</name>
    <dbReference type="NCBI Taxonomy" id="409438"/>
    <lineage>
        <taxon>Bacteria</taxon>
        <taxon>Pseudomonadati</taxon>
        <taxon>Pseudomonadota</taxon>
        <taxon>Gammaproteobacteria</taxon>
        <taxon>Enterobacterales</taxon>
        <taxon>Enterobacteriaceae</taxon>
        <taxon>Escherichia</taxon>
    </lineage>
</organism>